<name>RL7_STRPN</name>
<reference key="1">
    <citation type="journal article" date="2001" name="Science">
        <title>Complete genome sequence of a virulent isolate of Streptococcus pneumoniae.</title>
        <authorList>
            <person name="Tettelin H."/>
            <person name="Nelson K.E."/>
            <person name="Paulsen I.T."/>
            <person name="Eisen J.A."/>
            <person name="Read T.D."/>
            <person name="Peterson S.N."/>
            <person name="Heidelberg J.F."/>
            <person name="DeBoy R.T."/>
            <person name="Haft D.H."/>
            <person name="Dodson R.J."/>
            <person name="Durkin A.S."/>
            <person name="Gwinn M.L."/>
            <person name="Kolonay J.F."/>
            <person name="Nelson W.C."/>
            <person name="Peterson J.D."/>
            <person name="Umayam L.A."/>
            <person name="White O."/>
            <person name="Salzberg S.L."/>
            <person name="Lewis M.R."/>
            <person name="Radune D."/>
            <person name="Holtzapple E.K."/>
            <person name="Khouri H.M."/>
            <person name="Wolf A.M."/>
            <person name="Utterback T.R."/>
            <person name="Hansen C.L."/>
            <person name="McDonald L.A."/>
            <person name="Feldblyum T.V."/>
            <person name="Angiuoli S.V."/>
            <person name="Dickinson T."/>
            <person name="Hickey E.K."/>
            <person name="Holt I.E."/>
            <person name="Loftus B.J."/>
            <person name="Yang F."/>
            <person name="Smith H.O."/>
            <person name="Venter J.C."/>
            <person name="Dougherty B.A."/>
            <person name="Morrison D.A."/>
            <person name="Hollingshead S.K."/>
            <person name="Fraser C.M."/>
        </authorList>
    </citation>
    <scope>NUCLEOTIDE SEQUENCE [LARGE SCALE GENOMIC DNA]</scope>
    <source>
        <strain>ATCC BAA-334 / TIGR4</strain>
    </source>
</reference>
<reference key="2">
    <citation type="journal article" date="1997" name="Microbiology">
        <title>Monoclonal antibodies against Streptococcus pneumoniae detect epitopes on eubacterial ribosomal proteins L7/L12 and on streptococcal elongation factor Ts.</title>
        <authorList>
            <person name="Kolberg J."/>
            <person name="Hoiby E.A."/>
            <person name="Lopez R."/>
            <person name="Sletten K."/>
        </authorList>
    </citation>
    <scope>PROTEIN SEQUENCE OF 2-43</scope>
</reference>
<sequence length="122" mass="12442">MALNIENIIAEIKEASILELNDLVKAIEEEFGVTAAAPVAVAAADAADAGAAKDSFDVELTSAGDKKVGVIKVVREITGLGLKEAKELVDGAPALVKEGVATAEAEEIKAKLEEAGASVTLK</sequence>
<accession>P0A471</accession>
<accession>P80714</accession>
<evidence type="ECO:0000255" key="1">
    <source>
        <dbReference type="HAMAP-Rule" id="MF_00368"/>
    </source>
</evidence>
<evidence type="ECO:0000269" key="2">
    <source>
    </source>
</evidence>
<evidence type="ECO:0000305" key="3"/>
<organism>
    <name type="scientific">Streptococcus pneumoniae serotype 4 (strain ATCC BAA-334 / TIGR4)</name>
    <dbReference type="NCBI Taxonomy" id="170187"/>
    <lineage>
        <taxon>Bacteria</taxon>
        <taxon>Bacillati</taxon>
        <taxon>Bacillota</taxon>
        <taxon>Bacilli</taxon>
        <taxon>Lactobacillales</taxon>
        <taxon>Streptococcaceae</taxon>
        <taxon>Streptococcus</taxon>
    </lineage>
</organism>
<feature type="initiator methionine" description="Removed" evidence="2">
    <location>
        <position position="1"/>
    </location>
</feature>
<feature type="chain" id="PRO_0000157588" description="Large ribosomal subunit protein bL12">
    <location>
        <begin position="2"/>
        <end position="122"/>
    </location>
</feature>
<comment type="function">
    <text evidence="1">Forms part of the ribosomal stalk which helps the ribosome interact with GTP-bound translation factors. Is thus essential for accurate translation.</text>
</comment>
<comment type="subunit">
    <text evidence="1">Homodimer. Part of the ribosomal stalk of the 50S ribosomal subunit. Forms a multimeric L10(L12)X complex, where L10 forms an elongated spine to which 2 to 4 L12 dimers bind in a sequential fashion. Binds GTP-bound translation factors.</text>
</comment>
<comment type="interaction">
    <interactant intactId="EBI-11615974">
        <id>P0A471</id>
    </interactant>
    <interactant intactId="EBI-3990226">
        <id>Q37995</id>
        <label>orf10</label>
    </interactant>
    <organismsDiffer>true</organismsDiffer>
    <experiments>2</experiments>
</comment>
<comment type="similarity">
    <text evidence="1">Belongs to the bacterial ribosomal protein bL12 family.</text>
</comment>
<dbReference type="EMBL" id="AE005672">
    <property type="protein sequence ID" value="AAK75452.1"/>
    <property type="molecule type" value="Genomic_DNA"/>
</dbReference>
<dbReference type="PIR" id="C95157">
    <property type="entry name" value="C95157"/>
</dbReference>
<dbReference type="RefSeq" id="WP_001196960.1">
    <property type="nucleotide sequence ID" value="NZ_CP155539.1"/>
</dbReference>
<dbReference type="SMR" id="P0A471"/>
<dbReference type="IntAct" id="P0A471">
    <property type="interactions" value="1"/>
</dbReference>
<dbReference type="PaxDb" id="170187-SP_1354"/>
<dbReference type="EnsemblBacteria" id="AAK75452">
    <property type="protein sequence ID" value="AAK75452"/>
    <property type="gene ID" value="SP_1354"/>
</dbReference>
<dbReference type="GeneID" id="45653386"/>
<dbReference type="KEGG" id="spn:SP_1354"/>
<dbReference type="eggNOG" id="COG0222">
    <property type="taxonomic scope" value="Bacteria"/>
</dbReference>
<dbReference type="BioCyc" id="SPNE170187:G1FZB-1360-MONOMER"/>
<dbReference type="Proteomes" id="UP000000585">
    <property type="component" value="Chromosome"/>
</dbReference>
<dbReference type="GO" id="GO:0022625">
    <property type="term" value="C:cytosolic large ribosomal subunit"/>
    <property type="evidence" value="ECO:0007669"/>
    <property type="project" value="TreeGrafter"/>
</dbReference>
<dbReference type="GO" id="GO:0003729">
    <property type="term" value="F:mRNA binding"/>
    <property type="evidence" value="ECO:0007669"/>
    <property type="project" value="TreeGrafter"/>
</dbReference>
<dbReference type="GO" id="GO:0003735">
    <property type="term" value="F:structural constituent of ribosome"/>
    <property type="evidence" value="ECO:0007669"/>
    <property type="project" value="InterPro"/>
</dbReference>
<dbReference type="GO" id="GO:0006412">
    <property type="term" value="P:translation"/>
    <property type="evidence" value="ECO:0007669"/>
    <property type="project" value="UniProtKB-UniRule"/>
</dbReference>
<dbReference type="CDD" id="cd00387">
    <property type="entry name" value="Ribosomal_L7_L12"/>
    <property type="match status" value="1"/>
</dbReference>
<dbReference type="FunFam" id="1.20.5.710:FF:000002">
    <property type="entry name" value="50S ribosomal protein L7/L12"/>
    <property type="match status" value="1"/>
</dbReference>
<dbReference type="FunFam" id="3.30.1390.10:FF:000001">
    <property type="entry name" value="50S ribosomal protein L7/L12"/>
    <property type="match status" value="1"/>
</dbReference>
<dbReference type="Gene3D" id="3.30.1390.10">
    <property type="match status" value="1"/>
</dbReference>
<dbReference type="Gene3D" id="1.20.5.710">
    <property type="entry name" value="Single helix bin"/>
    <property type="match status" value="1"/>
</dbReference>
<dbReference type="HAMAP" id="MF_00368">
    <property type="entry name" value="Ribosomal_bL12"/>
    <property type="match status" value="1"/>
</dbReference>
<dbReference type="InterPro" id="IPR000206">
    <property type="entry name" value="Ribosomal_bL12"/>
</dbReference>
<dbReference type="InterPro" id="IPR013823">
    <property type="entry name" value="Ribosomal_bL12_C"/>
</dbReference>
<dbReference type="InterPro" id="IPR014719">
    <property type="entry name" value="Ribosomal_bL12_C/ClpS-like"/>
</dbReference>
<dbReference type="InterPro" id="IPR008932">
    <property type="entry name" value="Ribosomal_bL12_oligo"/>
</dbReference>
<dbReference type="InterPro" id="IPR036235">
    <property type="entry name" value="Ribosomal_bL12_oligo_N_sf"/>
</dbReference>
<dbReference type="NCBIfam" id="TIGR00855">
    <property type="entry name" value="L12"/>
    <property type="match status" value="1"/>
</dbReference>
<dbReference type="PANTHER" id="PTHR45987">
    <property type="entry name" value="39S RIBOSOMAL PROTEIN L12"/>
    <property type="match status" value="1"/>
</dbReference>
<dbReference type="PANTHER" id="PTHR45987:SF4">
    <property type="entry name" value="LARGE RIBOSOMAL SUBUNIT PROTEIN BL12M"/>
    <property type="match status" value="1"/>
</dbReference>
<dbReference type="Pfam" id="PF00542">
    <property type="entry name" value="Ribosomal_L12"/>
    <property type="match status" value="1"/>
</dbReference>
<dbReference type="Pfam" id="PF16320">
    <property type="entry name" value="Ribosomal_L12_N"/>
    <property type="match status" value="1"/>
</dbReference>
<dbReference type="SUPFAM" id="SSF54736">
    <property type="entry name" value="ClpS-like"/>
    <property type="match status" value="1"/>
</dbReference>
<dbReference type="SUPFAM" id="SSF48300">
    <property type="entry name" value="Ribosomal protein L7/12, oligomerisation (N-terminal) domain"/>
    <property type="match status" value="1"/>
</dbReference>
<keyword id="KW-0903">Direct protein sequencing</keyword>
<keyword id="KW-1185">Reference proteome</keyword>
<keyword id="KW-0687">Ribonucleoprotein</keyword>
<keyword id="KW-0689">Ribosomal protein</keyword>
<proteinExistence type="evidence at protein level"/>
<gene>
    <name evidence="1" type="primary">rplL</name>
    <name type="ordered locus">SP_1354</name>
</gene>
<protein>
    <recommendedName>
        <fullName evidence="1">Large ribosomal subunit protein bL12</fullName>
    </recommendedName>
    <alternativeName>
        <fullName evidence="3">50S ribosomal protein L7/L12</fullName>
    </alternativeName>
</protein>